<accession>Q13VE9</accession>
<feature type="chain" id="PRO_0000351741" description="Ribosome maturation factor RimM">
    <location>
        <begin position="1"/>
        <end position="244"/>
    </location>
</feature>
<feature type="domain" description="PRC barrel" evidence="1">
    <location>
        <begin position="163"/>
        <end position="244"/>
    </location>
</feature>
<feature type="region of interest" description="Disordered" evidence="2">
    <location>
        <begin position="1"/>
        <end position="58"/>
    </location>
</feature>
<feature type="compositionally biased region" description="Low complexity" evidence="2">
    <location>
        <begin position="13"/>
        <end position="22"/>
    </location>
</feature>
<feature type="compositionally biased region" description="Basic and acidic residues" evidence="2">
    <location>
        <begin position="35"/>
        <end position="44"/>
    </location>
</feature>
<feature type="compositionally biased region" description="Low complexity" evidence="2">
    <location>
        <begin position="45"/>
        <end position="57"/>
    </location>
</feature>
<organism>
    <name type="scientific">Paraburkholderia xenovorans (strain LB400)</name>
    <dbReference type="NCBI Taxonomy" id="266265"/>
    <lineage>
        <taxon>Bacteria</taxon>
        <taxon>Pseudomonadati</taxon>
        <taxon>Pseudomonadota</taxon>
        <taxon>Betaproteobacteria</taxon>
        <taxon>Burkholderiales</taxon>
        <taxon>Burkholderiaceae</taxon>
        <taxon>Paraburkholderia</taxon>
    </lineage>
</organism>
<keyword id="KW-0143">Chaperone</keyword>
<keyword id="KW-0963">Cytoplasm</keyword>
<keyword id="KW-1185">Reference proteome</keyword>
<keyword id="KW-0690">Ribosome biogenesis</keyword>
<keyword id="KW-0698">rRNA processing</keyword>
<evidence type="ECO:0000255" key="1">
    <source>
        <dbReference type="HAMAP-Rule" id="MF_00014"/>
    </source>
</evidence>
<evidence type="ECO:0000256" key="2">
    <source>
        <dbReference type="SAM" id="MobiDB-lite"/>
    </source>
</evidence>
<protein>
    <recommendedName>
        <fullName evidence="1">Ribosome maturation factor RimM</fullName>
    </recommendedName>
</protein>
<reference key="1">
    <citation type="journal article" date="2006" name="Proc. Natl. Acad. Sci. U.S.A.">
        <title>Burkholderia xenovorans LB400 harbors a multi-replicon, 9.73-Mbp genome shaped for versatility.</title>
        <authorList>
            <person name="Chain P.S.G."/>
            <person name="Denef V.J."/>
            <person name="Konstantinidis K.T."/>
            <person name="Vergez L.M."/>
            <person name="Agullo L."/>
            <person name="Reyes V.L."/>
            <person name="Hauser L."/>
            <person name="Cordova M."/>
            <person name="Gomez L."/>
            <person name="Gonzalez M."/>
            <person name="Land M."/>
            <person name="Lao V."/>
            <person name="Larimer F."/>
            <person name="LiPuma J.J."/>
            <person name="Mahenthiralingam E."/>
            <person name="Malfatti S.A."/>
            <person name="Marx C.J."/>
            <person name="Parnell J.J."/>
            <person name="Ramette A."/>
            <person name="Richardson P."/>
            <person name="Seeger M."/>
            <person name="Smith D."/>
            <person name="Spilker T."/>
            <person name="Sul W.J."/>
            <person name="Tsoi T.V."/>
            <person name="Ulrich L.E."/>
            <person name="Zhulin I.B."/>
            <person name="Tiedje J.M."/>
        </authorList>
    </citation>
    <scope>NUCLEOTIDE SEQUENCE [LARGE SCALE GENOMIC DNA]</scope>
    <source>
        <strain>LB400</strain>
    </source>
</reference>
<name>RIMM_PARXL</name>
<proteinExistence type="inferred from homology"/>
<comment type="function">
    <text evidence="1">An accessory protein needed during the final step in the assembly of 30S ribosomal subunit, possibly for assembly of the head region. Essential for efficient processing of 16S rRNA. May be needed both before and after RbfA during the maturation of 16S rRNA. It has affinity for free ribosomal 30S subunits but not for 70S ribosomes.</text>
</comment>
<comment type="subunit">
    <text evidence="1">Binds ribosomal protein uS19.</text>
</comment>
<comment type="subcellular location">
    <subcellularLocation>
        <location evidence="1">Cytoplasm</location>
    </subcellularLocation>
</comment>
<comment type="domain">
    <text evidence="1">The PRC barrel domain binds ribosomal protein uS19.</text>
</comment>
<comment type="similarity">
    <text evidence="1">Belongs to the RimM family.</text>
</comment>
<gene>
    <name evidence="1" type="primary">rimM</name>
    <name type="ordered locus">Bxeno_A3402</name>
    <name type="ORF">Bxe_A1007</name>
</gene>
<dbReference type="EMBL" id="CP000270">
    <property type="protein sequence ID" value="ABE31940.1"/>
    <property type="molecule type" value="Genomic_DNA"/>
</dbReference>
<dbReference type="RefSeq" id="WP_011489458.1">
    <property type="nucleotide sequence ID" value="NC_007951.1"/>
</dbReference>
<dbReference type="SMR" id="Q13VE9"/>
<dbReference type="STRING" id="266265.Bxe_A1007"/>
<dbReference type="KEGG" id="bxb:DR64_3169"/>
<dbReference type="KEGG" id="bxe:Bxe_A1007"/>
<dbReference type="PATRIC" id="fig|266265.5.peg.3573"/>
<dbReference type="eggNOG" id="COG0806">
    <property type="taxonomic scope" value="Bacteria"/>
</dbReference>
<dbReference type="OrthoDB" id="9783509at2"/>
<dbReference type="Proteomes" id="UP000001817">
    <property type="component" value="Chromosome 1"/>
</dbReference>
<dbReference type="GO" id="GO:0005737">
    <property type="term" value="C:cytoplasm"/>
    <property type="evidence" value="ECO:0007669"/>
    <property type="project" value="UniProtKB-SubCell"/>
</dbReference>
<dbReference type="GO" id="GO:0005840">
    <property type="term" value="C:ribosome"/>
    <property type="evidence" value="ECO:0007669"/>
    <property type="project" value="InterPro"/>
</dbReference>
<dbReference type="GO" id="GO:0043022">
    <property type="term" value="F:ribosome binding"/>
    <property type="evidence" value="ECO:0007669"/>
    <property type="project" value="InterPro"/>
</dbReference>
<dbReference type="GO" id="GO:0042274">
    <property type="term" value="P:ribosomal small subunit biogenesis"/>
    <property type="evidence" value="ECO:0007669"/>
    <property type="project" value="UniProtKB-UniRule"/>
</dbReference>
<dbReference type="GO" id="GO:0006364">
    <property type="term" value="P:rRNA processing"/>
    <property type="evidence" value="ECO:0007669"/>
    <property type="project" value="UniProtKB-UniRule"/>
</dbReference>
<dbReference type="Gene3D" id="2.30.30.240">
    <property type="entry name" value="PRC-barrel domain"/>
    <property type="match status" value="1"/>
</dbReference>
<dbReference type="Gene3D" id="2.40.30.60">
    <property type="entry name" value="RimM"/>
    <property type="match status" value="1"/>
</dbReference>
<dbReference type="HAMAP" id="MF_00014">
    <property type="entry name" value="Ribosome_mat_RimM"/>
    <property type="match status" value="1"/>
</dbReference>
<dbReference type="InterPro" id="IPR011033">
    <property type="entry name" value="PRC_barrel-like_sf"/>
</dbReference>
<dbReference type="InterPro" id="IPR056792">
    <property type="entry name" value="PRC_RimM"/>
</dbReference>
<dbReference type="InterPro" id="IPR011961">
    <property type="entry name" value="RimM"/>
</dbReference>
<dbReference type="InterPro" id="IPR002676">
    <property type="entry name" value="RimM_N"/>
</dbReference>
<dbReference type="InterPro" id="IPR036976">
    <property type="entry name" value="RimM_N_sf"/>
</dbReference>
<dbReference type="InterPro" id="IPR009000">
    <property type="entry name" value="Transl_B-barrel_sf"/>
</dbReference>
<dbReference type="NCBIfam" id="TIGR02273">
    <property type="entry name" value="16S_RimM"/>
    <property type="match status" value="1"/>
</dbReference>
<dbReference type="PANTHER" id="PTHR33692">
    <property type="entry name" value="RIBOSOME MATURATION FACTOR RIMM"/>
    <property type="match status" value="1"/>
</dbReference>
<dbReference type="PANTHER" id="PTHR33692:SF1">
    <property type="entry name" value="RIBOSOME MATURATION FACTOR RIMM"/>
    <property type="match status" value="1"/>
</dbReference>
<dbReference type="Pfam" id="PF24986">
    <property type="entry name" value="PRC_RimM"/>
    <property type="match status" value="1"/>
</dbReference>
<dbReference type="Pfam" id="PF01782">
    <property type="entry name" value="RimM"/>
    <property type="match status" value="1"/>
</dbReference>
<dbReference type="SUPFAM" id="SSF50346">
    <property type="entry name" value="PRC-barrel domain"/>
    <property type="match status" value="1"/>
</dbReference>
<dbReference type="SUPFAM" id="SSF50447">
    <property type="entry name" value="Translation proteins"/>
    <property type="match status" value="1"/>
</dbReference>
<sequence>MSERDSGSSGPVKAKAAAPRAKTSGQAPFGAFVRKPVEKTEGKAKANAANAGSGATEMRMETAESWPVDAVEVGAIVDAYGLKGWVKVAAHADAGHGGDALLSAKRWWLLKGQERKSAPSLQAKTHSDSVVAHLGGVTDRDVALALRGSRVYISRSEFPALGADEFYWVDLLGLDVVNVAGVSLGKVADMIDNGAHSVLRIEYPATDKSGKPVTGERLIPFVGVFVKTVDQAAKQITVDWEADY</sequence>